<accession>Q12ZV2</accession>
<organism>
    <name type="scientific">Rhodopseudomonas palustris (strain BisB5)</name>
    <dbReference type="NCBI Taxonomy" id="316057"/>
    <lineage>
        <taxon>Bacteria</taxon>
        <taxon>Pseudomonadati</taxon>
        <taxon>Pseudomonadota</taxon>
        <taxon>Alphaproteobacteria</taxon>
        <taxon>Hyphomicrobiales</taxon>
        <taxon>Nitrobacteraceae</taxon>
        <taxon>Rhodopseudomonas</taxon>
    </lineage>
</organism>
<proteinExistence type="inferred from homology"/>
<evidence type="ECO:0000255" key="1">
    <source>
        <dbReference type="HAMAP-Rule" id="MF_00500"/>
    </source>
</evidence>
<evidence type="ECO:0000256" key="2">
    <source>
        <dbReference type="SAM" id="MobiDB-lite"/>
    </source>
</evidence>
<evidence type="ECO:0000305" key="3"/>
<protein>
    <recommendedName>
        <fullName evidence="1">Small ribosomal subunit protein bS20</fullName>
    </recommendedName>
    <alternativeName>
        <fullName evidence="3">30S ribosomal protein S20</fullName>
    </alternativeName>
</protein>
<keyword id="KW-0687">Ribonucleoprotein</keyword>
<keyword id="KW-0689">Ribosomal protein</keyword>
<keyword id="KW-0694">RNA-binding</keyword>
<keyword id="KW-0699">rRNA-binding</keyword>
<sequence length="88" mass="9498">MANTSSAKKATRKIARRTAVNKSRRTQMRGSVRTVEEAIASGDRDAAVKALANAEPALMRAAQRNIVHKNAASRKVSRLASRIAQLGK</sequence>
<reference key="1">
    <citation type="submission" date="2006-03" db="EMBL/GenBank/DDBJ databases">
        <title>Complete sequence of Rhodopseudomonas palustris BisB5.</title>
        <authorList>
            <consortium name="US DOE Joint Genome Institute"/>
            <person name="Copeland A."/>
            <person name="Lucas S."/>
            <person name="Lapidus A."/>
            <person name="Barry K."/>
            <person name="Detter J.C."/>
            <person name="Glavina del Rio T."/>
            <person name="Hammon N."/>
            <person name="Israni S."/>
            <person name="Dalin E."/>
            <person name="Tice H."/>
            <person name="Pitluck S."/>
            <person name="Chain P."/>
            <person name="Malfatti S."/>
            <person name="Shin M."/>
            <person name="Vergez L."/>
            <person name="Schmutz J."/>
            <person name="Larimer F."/>
            <person name="Land M."/>
            <person name="Hauser L."/>
            <person name="Pelletier D.A."/>
            <person name="Kyrpides N."/>
            <person name="Lykidis A."/>
            <person name="Oda Y."/>
            <person name="Harwood C.S."/>
            <person name="Richardson P."/>
        </authorList>
    </citation>
    <scope>NUCLEOTIDE SEQUENCE [LARGE SCALE GENOMIC DNA]</scope>
    <source>
        <strain>BisB5</strain>
    </source>
</reference>
<name>RS20_RHOPS</name>
<gene>
    <name evidence="1" type="primary">rpsT</name>
    <name type="ordered locus">RPD_4421</name>
</gene>
<dbReference type="EMBL" id="CP000283">
    <property type="protein sequence ID" value="ABE41637.1"/>
    <property type="molecule type" value="Genomic_DNA"/>
</dbReference>
<dbReference type="SMR" id="Q12ZV2"/>
<dbReference type="STRING" id="316057.RPD_4421"/>
<dbReference type="KEGG" id="rpd:RPD_4421"/>
<dbReference type="eggNOG" id="COG0268">
    <property type="taxonomic scope" value="Bacteria"/>
</dbReference>
<dbReference type="HOGENOM" id="CLU_160655_3_0_5"/>
<dbReference type="BioCyc" id="RPAL316057:RPD_RS22240-MONOMER"/>
<dbReference type="Proteomes" id="UP000001818">
    <property type="component" value="Chromosome"/>
</dbReference>
<dbReference type="GO" id="GO:0005829">
    <property type="term" value="C:cytosol"/>
    <property type="evidence" value="ECO:0007669"/>
    <property type="project" value="TreeGrafter"/>
</dbReference>
<dbReference type="GO" id="GO:0015935">
    <property type="term" value="C:small ribosomal subunit"/>
    <property type="evidence" value="ECO:0007669"/>
    <property type="project" value="TreeGrafter"/>
</dbReference>
<dbReference type="GO" id="GO:0070181">
    <property type="term" value="F:small ribosomal subunit rRNA binding"/>
    <property type="evidence" value="ECO:0007669"/>
    <property type="project" value="TreeGrafter"/>
</dbReference>
<dbReference type="GO" id="GO:0003735">
    <property type="term" value="F:structural constituent of ribosome"/>
    <property type="evidence" value="ECO:0007669"/>
    <property type="project" value="InterPro"/>
</dbReference>
<dbReference type="GO" id="GO:0006412">
    <property type="term" value="P:translation"/>
    <property type="evidence" value="ECO:0007669"/>
    <property type="project" value="UniProtKB-UniRule"/>
</dbReference>
<dbReference type="Gene3D" id="1.20.58.110">
    <property type="entry name" value="Ribosomal protein S20"/>
    <property type="match status" value="1"/>
</dbReference>
<dbReference type="HAMAP" id="MF_00500">
    <property type="entry name" value="Ribosomal_bS20"/>
    <property type="match status" value="1"/>
</dbReference>
<dbReference type="InterPro" id="IPR002583">
    <property type="entry name" value="Ribosomal_bS20"/>
</dbReference>
<dbReference type="InterPro" id="IPR036510">
    <property type="entry name" value="Ribosomal_bS20_sf"/>
</dbReference>
<dbReference type="NCBIfam" id="TIGR00029">
    <property type="entry name" value="S20"/>
    <property type="match status" value="1"/>
</dbReference>
<dbReference type="PANTHER" id="PTHR33398">
    <property type="entry name" value="30S RIBOSOMAL PROTEIN S20"/>
    <property type="match status" value="1"/>
</dbReference>
<dbReference type="PANTHER" id="PTHR33398:SF1">
    <property type="entry name" value="SMALL RIBOSOMAL SUBUNIT PROTEIN BS20C"/>
    <property type="match status" value="1"/>
</dbReference>
<dbReference type="Pfam" id="PF01649">
    <property type="entry name" value="Ribosomal_S20p"/>
    <property type="match status" value="1"/>
</dbReference>
<dbReference type="SUPFAM" id="SSF46992">
    <property type="entry name" value="Ribosomal protein S20"/>
    <property type="match status" value="1"/>
</dbReference>
<feature type="chain" id="PRO_1000014638" description="Small ribosomal subunit protein bS20">
    <location>
        <begin position="1"/>
        <end position="88"/>
    </location>
</feature>
<feature type="region of interest" description="Disordered" evidence="2">
    <location>
        <begin position="1"/>
        <end position="33"/>
    </location>
</feature>
<comment type="function">
    <text evidence="1">Binds directly to 16S ribosomal RNA.</text>
</comment>
<comment type="similarity">
    <text evidence="1">Belongs to the bacterial ribosomal protein bS20 family.</text>
</comment>